<organism>
    <name type="scientific">Latilactobacillus sakei subsp. sakei (strain 23K)</name>
    <name type="common">Lactobacillus sakei subsp. sakei</name>
    <dbReference type="NCBI Taxonomy" id="314315"/>
    <lineage>
        <taxon>Bacteria</taxon>
        <taxon>Bacillati</taxon>
        <taxon>Bacillota</taxon>
        <taxon>Bacilli</taxon>
        <taxon>Lactobacillales</taxon>
        <taxon>Lactobacillaceae</taxon>
        <taxon>Latilactobacillus</taxon>
    </lineage>
</organism>
<comment type="catalytic activity">
    <reaction evidence="1">
        <text>adenine + H2O + H(+) = hypoxanthine + NH4(+)</text>
        <dbReference type="Rhea" id="RHEA:23688"/>
        <dbReference type="ChEBI" id="CHEBI:15377"/>
        <dbReference type="ChEBI" id="CHEBI:15378"/>
        <dbReference type="ChEBI" id="CHEBI:16708"/>
        <dbReference type="ChEBI" id="CHEBI:17368"/>
        <dbReference type="ChEBI" id="CHEBI:28938"/>
        <dbReference type="EC" id="3.5.4.2"/>
    </reaction>
</comment>
<comment type="cofactor">
    <cofactor evidence="1">
        <name>Mn(2+)</name>
        <dbReference type="ChEBI" id="CHEBI:29035"/>
    </cofactor>
</comment>
<comment type="similarity">
    <text evidence="1">Belongs to the metallo-dependent hydrolases superfamily. Adenine deaminase family.</text>
</comment>
<evidence type="ECO:0000255" key="1">
    <source>
        <dbReference type="HAMAP-Rule" id="MF_01518"/>
    </source>
</evidence>
<accession>Q38ZJ0</accession>
<sequence length="594" mass="64210">MIMSDRLTAFKELIQAGGAKRPADLIIKNGQLVNVMTAEIYPAEVAIYQGKIVAVDPDVSAYQGTETRVIDAKQQYIVPGLIDGHIHVECSKLSMTSFAEAVVPHGTTSIISGLDEYISVIGVDGLSEIFKEVDQLPMRVFWGAPFKTPYTIPASTIADNIDSTVQAQLQKRSDVYGVWETVREAVETLDEDTLKTLLNAQDNHVPVWGCAPMATGTKLNEYLMSGVRVDHESYDHQELLEKVRKGINVVIRESSVTHFLAENIRAITETNGQIARHVSFCTDDVNAMDIVNKGHLDHLVRLAIAAGVAPMTAIQMATINSAEAYRIDDQVGLIAPGRNADILLVSDLEAFEIKRVLAKGQPVATDGHINQSIERPVRPASLANTIIREAVQASDFEYHVAADASQVTVQTIASEGPFVRHAKTKTLTVEDGIVQIDPAKDVALISVLERFGKNGNQSLGFTSGWTLKKGAMASTAAPDDNNIIVMGVNPDDMALAVNTLIERDGGQVVVADGQILSFLPLPIAGIVSDVTPAELAVQEEGILKASQAIGSEVVDPMFYMTFLPITAIPDLAITDLGNVDCNELRLFDPILTIQ</sequence>
<name>ADEC1_LATSS</name>
<keyword id="KW-0378">Hydrolase</keyword>
<keyword id="KW-0464">Manganese</keyword>
<keyword id="KW-1185">Reference proteome</keyword>
<feature type="chain" id="PRO_0000292384" description="Adenine deaminase 1">
    <location>
        <begin position="1"/>
        <end position="594"/>
    </location>
</feature>
<dbReference type="EC" id="3.5.4.2" evidence="1"/>
<dbReference type="EMBL" id="CR936503">
    <property type="protein sequence ID" value="CAI54387.1"/>
    <property type="molecule type" value="Genomic_DNA"/>
</dbReference>
<dbReference type="RefSeq" id="WP_011373801.1">
    <property type="nucleotide sequence ID" value="NC_007576.1"/>
</dbReference>
<dbReference type="SMR" id="Q38ZJ0"/>
<dbReference type="STRING" id="314315.LCA_0088"/>
<dbReference type="KEGG" id="lsa:LCA_0088"/>
<dbReference type="eggNOG" id="COG1001">
    <property type="taxonomic scope" value="Bacteria"/>
</dbReference>
<dbReference type="HOGENOM" id="CLU_027935_0_0_9"/>
<dbReference type="OrthoDB" id="9775607at2"/>
<dbReference type="Proteomes" id="UP000002707">
    <property type="component" value="Chromosome"/>
</dbReference>
<dbReference type="GO" id="GO:0000034">
    <property type="term" value="F:adenine deaminase activity"/>
    <property type="evidence" value="ECO:0007669"/>
    <property type="project" value="UniProtKB-UniRule"/>
</dbReference>
<dbReference type="GO" id="GO:0006146">
    <property type="term" value="P:adenine catabolic process"/>
    <property type="evidence" value="ECO:0007669"/>
    <property type="project" value="InterPro"/>
</dbReference>
<dbReference type="Gene3D" id="3.20.20.140">
    <property type="entry name" value="Metal-dependent hydrolases"/>
    <property type="match status" value="1"/>
</dbReference>
<dbReference type="Gene3D" id="2.30.40.10">
    <property type="entry name" value="Urease, subunit C, domain 1"/>
    <property type="match status" value="1"/>
</dbReference>
<dbReference type="HAMAP" id="MF_01518">
    <property type="entry name" value="Adenine_deamin"/>
    <property type="match status" value="1"/>
</dbReference>
<dbReference type="InterPro" id="IPR006679">
    <property type="entry name" value="Adenine_deam"/>
</dbReference>
<dbReference type="InterPro" id="IPR026912">
    <property type="entry name" value="Adenine_deam_C"/>
</dbReference>
<dbReference type="InterPro" id="IPR006680">
    <property type="entry name" value="Amidohydro-rel"/>
</dbReference>
<dbReference type="InterPro" id="IPR011059">
    <property type="entry name" value="Metal-dep_hydrolase_composite"/>
</dbReference>
<dbReference type="InterPro" id="IPR032466">
    <property type="entry name" value="Metal_Hydrolase"/>
</dbReference>
<dbReference type="PANTHER" id="PTHR11113:SF2">
    <property type="entry name" value="ADENINE DEAMINASE"/>
    <property type="match status" value="1"/>
</dbReference>
<dbReference type="PANTHER" id="PTHR11113">
    <property type="entry name" value="N-ACETYLGLUCOSAMINE-6-PHOSPHATE DEACETYLASE"/>
    <property type="match status" value="1"/>
</dbReference>
<dbReference type="Pfam" id="PF13382">
    <property type="entry name" value="Adenine_deam_C"/>
    <property type="match status" value="1"/>
</dbReference>
<dbReference type="Pfam" id="PF01979">
    <property type="entry name" value="Amidohydro_1"/>
    <property type="match status" value="1"/>
</dbReference>
<dbReference type="SUPFAM" id="SSF51338">
    <property type="entry name" value="Composite domain of metallo-dependent hydrolases"/>
    <property type="match status" value="1"/>
</dbReference>
<dbReference type="SUPFAM" id="SSF51556">
    <property type="entry name" value="Metallo-dependent hydrolases"/>
    <property type="match status" value="1"/>
</dbReference>
<proteinExistence type="inferred from homology"/>
<protein>
    <recommendedName>
        <fullName evidence="1">Adenine deaminase 1</fullName>
        <shortName evidence="1">Adenase 1</shortName>
        <shortName evidence="1">Adenine aminase 1</shortName>
        <ecNumber evidence="1">3.5.4.2</ecNumber>
    </recommendedName>
</protein>
<reference key="1">
    <citation type="journal article" date="2005" name="Nat. Biotechnol.">
        <title>The complete genome sequence of the meat-borne lactic acid bacterium Lactobacillus sakei 23K.</title>
        <authorList>
            <person name="Chaillou S."/>
            <person name="Champomier-Verges M.-C."/>
            <person name="Cornet M."/>
            <person name="Crutz-Le Coq A.-M."/>
            <person name="Dudez A.-M."/>
            <person name="Martin V."/>
            <person name="Beaufils S."/>
            <person name="Darbon-Rongere E."/>
            <person name="Bossy R."/>
            <person name="Loux V."/>
            <person name="Zagorec M."/>
        </authorList>
    </citation>
    <scope>NUCLEOTIDE SEQUENCE [LARGE SCALE GENOMIC DNA]</scope>
    <source>
        <strain>23K</strain>
    </source>
</reference>
<gene>
    <name evidence="1" type="primary">ade1</name>
    <name type="synonym">adeC1</name>
    <name type="ordered locus">LCA_0088</name>
</gene>